<reference key="1">
    <citation type="journal article" date="2014" name="PLoS Genet.">
        <title>Analysis of the genome and transcriptome of Cryptococcus neoformans var. grubii reveals complex RNA expression and microevolution leading to virulence attenuation.</title>
        <authorList>
            <person name="Janbon G."/>
            <person name="Ormerod K.L."/>
            <person name="Paulet D."/>
            <person name="Byrnes E.J. III"/>
            <person name="Yadav V."/>
            <person name="Chatterjee G."/>
            <person name="Mullapudi N."/>
            <person name="Hon C.-C."/>
            <person name="Billmyre R.B."/>
            <person name="Brunel F."/>
            <person name="Bahn Y.-S."/>
            <person name="Chen W."/>
            <person name="Chen Y."/>
            <person name="Chow E.W.L."/>
            <person name="Coppee J.-Y."/>
            <person name="Floyd-Averette A."/>
            <person name="Gaillardin C."/>
            <person name="Gerik K.J."/>
            <person name="Goldberg J."/>
            <person name="Gonzalez-Hilarion S."/>
            <person name="Gujja S."/>
            <person name="Hamlin J.L."/>
            <person name="Hsueh Y.-P."/>
            <person name="Ianiri G."/>
            <person name="Jones S."/>
            <person name="Kodira C.D."/>
            <person name="Kozubowski L."/>
            <person name="Lam W."/>
            <person name="Marra M."/>
            <person name="Mesner L.D."/>
            <person name="Mieczkowski P.A."/>
            <person name="Moyrand F."/>
            <person name="Nielsen K."/>
            <person name="Proux C."/>
            <person name="Rossignol T."/>
            <person name="Schein J.E."/>
            <person name="Sun S."/>
            <person name="Wollschlaeger C."/>
            <person name="Wood I.A."/>
            <person name="Zeng Q."/>
            <person name="Neuveglise C."/>
            <person name="Newlon C.S."/>
            <person name="Perfect J.R."/>
            <person name="Lodge J.K."/>
            <person name="Idnurm A."/>
            <person name="Stajich J.E."/>
            <person name="Kronstad J.W."/>
            <person name="Sanyal K."/>
            <person name="Heitman J."/>
            <person name="Fraser J.A."/>
            <person name="Cuomo C.A."/>
            <person name="Dietrich F.S."/>
        </authorList>
    </citation>
    <scope>NUCLEOTIDE SEQUENCE [LARGE SCALE GENOMIC DNA]</scope>
    <source>
        <strain>H99 / ATCC 208821 / CBS 10515 / FGSC 9487</strain>
    </source>
</reference>
<reference key="2">
    <citation type="journal article" date="2007" name="J. Clin. Invest.">
        <title>Role of a CUF1/CTR4 copper regulatory axis in the virulence of Cryptococcus neoformans.</title>
        <authorList>
            <person name="Waterman S.R."/>
            <person name="Hacham M."/>
            <person name="Hu G."/>
            <person name="Zhu X."/>
            <person name="Park Y.D."/>
            <person name="Shin S."/>
            <person name="Panepinto J."/>
            <person name="Valyi-Nagy T."/>
            <person name="Beam C."/>
            <person name="Husain S."/>
            <person name="Singh N."/>
            <person name="Williamson P.R."/>
        </authorList>
    </citation>
    <scope>FUNCTION</scope>
    <scope>DOMAIN</scope>
    <scope>DISRUPTION PHENOTYPE</scope>
</reference>
<reference key="3">
    <citation type="journal article" date="2009" name="FEMS Microbiol. Lett.">
        <title>A copper-responsive factor gene CUF1 is required for copper induction of laccase in Cryptococcus neoformans.</title>
        <authorList>
            <person name="Jiang N."/>
            <person name="Sun N."/>
            <person name="Xiao D."/>
            <person name="Pan J."/>
            <person name="Wang Y."/>
            <person name="Zhu X."/>
        </authorList>
    </citation>
    <scope>FUNCTION</scope>
    <scope>DISRUPTION PHENOTYPE</scope>
</reference>
<reference key="4">
    <citation type="journal article" date="2009" name="Wei Sheng Wu Xue Bao">
        <title>Effect of the copper-responsive factor Cuf1 on the capsule biosynthesis in Cryptococcus neoformans.</title>
        <authorList>
            <person name="Jiang N."/>
            <person name="Liu X."/>
            <person name="Pan J."/>
            <person name="Wang Y."/>
            <person name="Zhu X."/>
        </authorList>
    </citation>
    <scope>FUNCTION</scope>
    <scope>DISRUPTION PHENOTYPE</scope>
</reference>
<reference key="5">
    <citation type="journal article" date="2011" name="FEMS Yeast Res.">
        <title>Regulation of copper homeostasis by Cuf1 associates with its subcellular localization in the pathogenic yeast Cryptococcus neoformans H99.</title>
        <authorList>
            <person name="Jiang N."/>
            <person name="Liu X."/>
            <person name="Yang J."/>
            <person name="Li Z."/>
            <person name="Pan J."/>
            <person name="Zhu X."/>
        </authorList>
    </citation>
    <scope>FUNCTION</scope>
    <scope>DISRUPTION PHENOTYPE</scope>
    <scope>SUBCELLULAR LOCATION</scope>
</reference>
<reference key="6">
    <citation type="journal article" date="2011" name="Mol. Microbiol.">
        <title>The copper regulon of the human fungal pathogen Cryptococcus neoformans H99.</title>
        <authorList>
            <person name="Ding C."/>
            <person name="Yin J."/>
            <person name="Tovar E.M."/>
            <person name="Fitzpatrick D.A."/>
            <person name="Higgins D.G."/>
            <person name="Thiele D.J."/>
        </authorList>
    </citation>
    <scope>FUNCTION</scope>
    <scope>DISRUPTION PHENOTYPE</scope>
</reference>
<reference key="7">
    <citation type="journal article" date="2013" name="Metallomics">
        <title>A copper hyperaccumulation phenotype correlates with pathogenesis in Cryptococcus neoformans.</title>
        <authorList>
            <person name="Raja M.R."/>
            <person name="Waterman S.R."/>
            <person name="Qiu J."/>
            <person name="Bleher R."/>
            <person name="Williamson P.R."/>
            <person name="O'Halloran T.V."/>
        </authorList>
    </citation>
    <scope>FUNCTION</scope>
    <scope>DISRUPTION PHENOTYPE</scope>
</reference>
<reference key="8">
    <citation type="journal article" date="2017" name="MBio">
        <title>Cryptococcus neoformans iron-sulfur protein biogenesis machinery is a novel layer of protection against Cu stress.</title>
        <authorList>
            <person name="Garcia-Santamarina S."/>
            <person name="Uzarska M.A."/>
            <person name="Festa R.A."/>
            <person name="Lill R."/>
            <person name="Thiele D.J."/>
        </authorList>
    </citation>
    <scope>FUNCTION</scope>
</reference>
<reference key="9">
    <citation type="journal article" date="2018" name="Mol. Microbiol.">
        <title>Genome-wide analysis of the regulation of Cu metabolism in Cryptococcus neoformans.</title>
        <authorList>
            <person name="Garcia-Santamarina S."/>
            <person name="Festa R.A."/>
            <person name="Smith A.D."/>
            <person name="Yu C.H."/>
            <person name="Probst C."/>
            <person name="Ding C."/>
            <person name="Homer C.M."/>
            <person name="Yin J."/>
            <person name="Noonan J.P."/>
            <person name="Madhani H."/>
            <person name="Perfect J.R."/>
            <person name="Thiele D.J."/>
        </authorList>
    </citation>
    <scope>FUNCTION</scope>
    <scope>DNA-BINDING</scope>
    <scope>DISRUPTION PHENOTYPE</scope>
</reference>
<reference key="10">
    <citation type="journal article" date="2020" name="Nat. Chem. Biol.">
        <title>A lytic polysaccharide monooxygenase-like protein functions in fungal copper import and meningitis.</title>
        <authorList>
            <person name="Garcia-Santamarina S."/>
            <person name="Probst C."/>
            <person name="Festa R.A."/>
            <person name="Ding C."/>
            <person name="Smith A.D."/>
            <person name="Conklin S.E."/>
            <person name="Brander S."/>
            <person name="Kinch L.N."/>
            <person name="Grishin N.V."/>
            <person name="Franz K.J."/>
            <person name="Riggs-Gelasco P."/>
            <person name="Lo Leggio L."/>
            <person name="Johansen K.S."/>
            <person name="Thiele D.J."/>
        </authorList>
    </citation>
    <scope>FUNCTION</scope>
    <scope>DNA-BINDING</scope>
    <scope>DISRUPTION PHENOTYPE</scope>
</reference>
<reference key="11">
    <citation type="journal article" date="2021" name="J. Biol. Chem.">
        <title>Transcription factor-driven alternative localization of Cryptococcus neoformans superoxide dismutase.</title>
        <authorList>
            <person name="Smith A.D."/>
            <person name="Garcia-Santamarina S."/>
            <person name="Ralle M."/>
            <person name="Loiselle D.R."/>
            <person name="Haystead T.A."/>
            <person name="Thiele D.J."/>
        </authorList>
    </citation>
    <scope>FUNCTION</scope>
    <scope>SUBCELLULAR LOCATION</scope>
    <scope>DISRUPTION PHENOTYPE</scope>
</reference>
<sequence>MVLINDKKFACEKCIKGHRVSACTHTDRPLFEVKKKGRPSTQCRHCKEKRKSAGSSVHTKCQCGATDPKTLKDILASVNAAHAAANESGGASATANTSAEPEIETRKGQPGSKPTFPRGLKDVHEIAAAANALQGWGEDDQVVKAAERTVQALLNPCKCELGGPCTCCQIKTKPRRKHSGHEFENPASAGATPPGGGCCGSSVHSRDDVATRNSPTSINSSEAIHHPPQTAPMLHKTRLFSPYSTDLRRRDSSSSTGSKTPGWASPRAMRPPVSRIKPLTDMRRLMNAAVNQDGTLASEIPRSVVGLPTLPGIESFNTSANLENGEKSKDVDMPLAFPTSEDVVIGACMCGDDCSCPGCATHDHHNISPSNRTHDGSCGESCKGHNDCAHSIPIPSGVQSIAQLICIAASQVPPPPPNRTDSLNPHDTRILPPSVSLSEDVARTMGIVPLKPLECCGGKCGCPPGECACTKQCCGCCGECTCEKDEDTRMEEEGEYTESARDVTTSSCGGCKGKEKQSGFSDMMSPQIPQSVSPTSYHVPPLQPKPLNLPVSTIHHSTLSPSFNTPQPSPPAVSSPADSLSMAVHPSNGPNVRPVPMIQPRPILPKRASDTGLVMPQGSRPPSALGRSGSMTATKRSGTSTGVRRSNSDVRKVVGPSQPHHRPSIQSSSDRSFYIGSPSNQIAPGGVPMASAPSQMTAPLNSADSNSDLLAFIQQQWSADKTSNSNSDMNPSHPTMPVSLTAEPWAFPPQNETTDDSAPVPFDLDAFLMSIGVQPDGELRNDRPLSSQPPQSLMPNIPPTQPIAPLPPIPPSMSDVRPGYDMTFANFFLNSTPSGPSGPSAIPATNIPSRHTTPQASRPLTPPESSFTEPPRWKFPGDLGGEIPIWNGPEALEGFGVLGSPVSEKEEVTEESQNEKDIIDLSKPLDSAALTKIMKALEKQGGGQSSSQGAPSVANTDQQLQSLPALQTVPPVHPASVISPTRADPAHELDDMFSQFVTLDGTPIGSNNDGLGLNGGPGMMALPTNLSLGDELGFGGEMRWDQARMWSN</sequence>
<organism>
    <name type="scientific">Cryptococcus neoformans var. grubii serotype A (strain H99 / ATCC 208821 / CBS 10515 / FGSC 9487)</name>
    <name type="common">Filobasidiella neoformans var. grubii</name>
    <dbReference type="NCBI Taxonomy" id="235443"/>
    <lineage>
        <taxon>Eukaryota</taxon>
        <taxon>Fungi</taxon>
        <taxon>Dikarya</taxon>
        <taxon>Basidiomycota</taxon>
        <taxon>Agaricomycotina</taxon>
        <taxon>Tremellomycetes</taxon>
        <taxon>Tremellales</taxon>
        <taxon>Cryptococcaceae</taxon>
        <taxon>Cryptococcus</taxon>
        <taxon>Cryptococcus neoformans species complex</taxon>
    </lineage>
</organism>
<dbReference type="EMBL" id="CP003827">
    <property type="protein sequence ID" value="AFR96571.1"/>
    <property type="molecule type" value="Genomic_DNA"/>
</dbReference>
<dbReference type="RefSeq" id="XP_012051375.1">
    <property type="nucleotide sequence ID" value="XM_012195985.1"/>
</dbReference>
<dbReference type="SMR" id="J9VT33"/>
<dbReference type="GeneID" id="23890545"/>
<dbReference type="KEGG" id="cng:CNAG_07724"/>
<dbReference type="VEuPathDB" id="FungiDB:CNAG_07724"/>
<dbReference type="HOGENOM" id="CLU_291511_0_0_1"/>
<dbReference type="OrthoDB" id="7678at5206"/>
<dbReference type="Proteomes" id="UP000010091">
    <property type="component" value="Chromosome 8"/>
</dbReference>
<dbReference type="GO" id="GO:0005938">
    <property type="term" value="C:cell cortex"/>
    <property type="evidence" value="ECO:0007669"/>
    <property type="project" value="UniProtKB-SubCell"/>
</dbReference>
<dbReference type="GO" id="GO:0000785">
    <property type="term" value="C:chromatin"/>
    <property type="evidence" value="ECO:0000314"/>
    <property type="project" value="UniProtKB"/>
</dbReference>
<dbReference type="GO" id="GO:0005634">
    <property type="term" value="C:nucleus"/>
    <property type="evidence" value="ECO:0000314"/>
    <property type="project" value="UniProtKB"/>
</dbReference>
<dbReference type="GO" id="GO:0005507">
    <property type="term" value="F:copper ion binding"/>
    <property type="evidence" value="ECO:0007669"/>
    <property type="project" value="InterPro"/>
</dbReference>
<dbReference type="GO" id="GO:0001228">
    <property type="term" value="F:DNA-binding transcription activator activity, RNA polymerase II-specific"/>
    <property type="evidence" value="ECO:0000314"/>
    <property type="project" value="UniProtKB"/>
</dbReference>
<dbReference type="GO" id="GO:0000978">
    <property type="term" value="F:RNA polymerase II cis-regulatory region sequence-specific DNA binding"/>
    <property type="evidence" value="ECO:0000305"/>
    <property type="project" value="UniProtKB"/>
</dbReference>
<dbReference type="GO" id="GO:0006878">
    <property type="term" value="P:intracellular copper ion homeostasis"/>
    <property type="evidence" value="ECO:0007669"/>
    <property type="project" value="TreeGrafter"/>
</dbReference>
<dbReference type="GO" id="GO:0006879">
    <property type="term" value="P:intracellular iron ion homeostasis"/>
    <property type="evidence" value="ECO:0007669"/>
    <property type="project" value="TreeGrafter"/>
</dbReference>
<dbReference type="GO" id="GO:1901670">
    <property type="term" value="P:negative regulation of superoxide dismutase activity"/>
    <property type="evidence" value="ECO:0000314"/>
    <property type="project" value="UniProtKB"/>
</dbReference>
<dbReference type="FunFam" id="3.90.430.10:FF:000001">
    <property type="entry name" value="Copper fist DNA-binding protein"/>
    <property type="match status" value="1"/>
</dbReference>
<dbReference type="Gene3D" id="3.90.430.10">
    <property type="entry name" value="Copper fist DNA-binding domain"/>
    <property type="match status" value="1"/>
</dbReference>
<dbReference type="InterPro" id="IPR051763">
    <property type="entry name" value="Copper_Homeo_Regul"/>
</dbReference>
<dbReference type="InterPro" id="IPR001083">
    <property type="entry name" value="Cu_fist_DNA-bd_dom"/>
</dbReference>
<dbReference type="InterPro" id="IPR036395">
    <property type="entry name" value="Cu_fist_DNA-bd_dom_sf"/>
</dbReference>
<dbReference type="PANTHER" id="PTHR28088">
    <property type="entry name" value="TRANSCRIPTIONAL ACTIVATOR HAA1-RELATED"/>
    <property type="match status" value="1"/>
</dbReference>
<dbReference type="PANTHER" id="PTHR28088:SF5">
    <property type="entry name" value="TRANSCRIPTIONAL ACTIVATOR HAA1-RELATED"/>
    <property type="match status" value="1"/>
</dbReference>
<dbReference type="Pfam" id="PF00649">
    <property type="entry name" value="Copper-fist"/>
    <property type="match status" value="1"/>
</dbReference>
<dbReference type="PRINTS" id="PR00617">
    <property type="entry name" value="COPPERFIST"/>
</dbReference>
<dbReference type="SMART" id="SM01090">
    <property type="entry name" value="Copper-fist"/>
    <property type="match status" value="1"/>
</dbReference>
<dbReference type="SMART" id="SM00412">
    <property type="entry name" value="Cu_FIST"/>
    <property type="match status" value="1"/>
</dbReference>
<dbReference type="SUPFAM" id="SSF57879">
    <property type="entry name" value="Zinc domain conserved in yeast copper-regulated transcription factors"/>
    <property type="match status" value="1"/>
</dbReference>
<dbReference type="PROSITE" id="PS50073">
    <property type="entry name" value="COPPER_FIST_2"/>
    <property type="match status" value="1"/>
</dbReference>
<name>CUF1_CRYNH</name>
<gene>
    <name evidence="13" type="primary">CUF1</name>
    <name type="ORF">CNAG_07724</name>
</gene>
<feature type="chain" id="PRO_0000449498" description="Copper-dependent transcription factor 1">
    <location>
        <begin position="1"/>
        <end position="1048"/>
    </location>
</feature>
<feature type="DNA-binding region" description="Copper-fist" evidence="1">
    <location>
        <begin position="1"/>
        <end position="40"/>
    </location>
</feature>
<feature type="region of interest" description="Disordered" evidence="2">
    <location>
        <begin position="85"/>
        <end position="117"/>
    </location>
</feature>
<feature type="region of interest" description="Disordered" evidence="2">
    <location>
        <begin position="178"/>
        <end position="273"/>
    </location>
</feature>
<feature type="region of interest" description="Disordered" evidence="2">
    <location>
        <begin position="506"/>
        <end position="702"/>
    </location>
</feature>
<feature type="region of interest" description="Disordered" evidence="2">
    <location>
        <begin position="835"/>
        <end position="876"/>
    </location>
</feature>
<feature type="short sequence motif" description="CRM-I" evidence="14 15 16">
    <location>
        <begin position="348"/>
        <end position="362"/>
    </location>
</feature>
<feature type="short sequence motif" description="CRM-II" evidence="15 16">
    <location>
        <begin position="455"/>
        <end position="482"/>
    </location>
</feature>
<feature type="compositionally biased region" description="Low complexity" evidence="2">
    <location>
        <begin position="85"/>
        <end position="99"/>
    </location>
</feature>
<feature type="compositionally biased region" description="Polar residues" evidence="2">
    <location>
        <begin position="211"/>
        <end position="222"/>
    </location>
</feature>
<feature type="compositionally biased region" description="Polar residues" evidence="2">
    <location>
        <begin position="527"/>
        <end position="536"/>
    </location>
</feature>
<feature type="compositionally biased region" description="Polar residues" evidence="2">
    <location>
        <begin position="550"/>
        <end position="565"/>
    </location>
</feature>
<feature type="compositionally biased region" description="Polar residues" evidence="2">
    <location>
        <begin position="629"/>
        <end position="645"/>
    </location>
</feature>
<feature type="compositionally biased region" description="Polar residues" evidence="2">
    <location>
        <begin position="664"/>
        <end position="682"/>
    </location>
</feature>
<feature type="compositionally biased region" description="Polar residues" evidence="2">
    <location>
        <begin position="692"/>
        <end position="702"/>
    </location>
</feature>
<feature type="compositionally biased region" description="Low complexity" evidence="2">
    <location>
        <begin position="835"/>
        <end position="845"/>
    </location>
</feature>
<feature type="compositionally biased region" description="Polar residues" evidence="2">
    <location>
        <begin position="846"/>
        <end position="868"/>
    </location>
</feature>
<feature type="binding site" evidence="1">
    <location>
        <position position="11"/>
    </location>
    <ligand>
        <name>Zn(2+)</name>
        <dbReference type="ChEBI" id="CHEBI:29105"/>
    </ligand>
</feature>
<feature type="binding site" evidence="1">
    <location>
        <position position="14"/>
    </location>
    <ligand>
        <name>Zn(2+)</name>
        <dbReference type="ChEBI" id="CHEBI:29105"/>
    </ligand>
</feature>
<feature type="binding site" evidence="1">
    <location>
        <position position="23"/>
    </location>
    <ligand>
        <name>Zn(2+)</name>
        <dbReference type="ChEBI" id="CHEBI:29105"/>
    </ligand>
</feature>
<feature type="binding site" evidence="1">
    <location>
        <position position="25"/>
    </location>
    <ligand>
        <name>Zn(2+)</name>
        <dbReference type="ChEBI" id="CHEBI:29105"/>
    </ligand>
</feature>
<proteinExistence type="evidence at protein level"/>
<evidence type="ECO:0000255" key="1">
    <source>
        <dbReference type="PROSITE-ProRule" id="PRU00055"/>
    </source>
</evidence>
<evidence type="ECO:0000256" key="2">
    <source>
        <dbReference type="SAM" id="MobiDB-lite"/>
    </source>
</evidence>
<evidence type="ECO:0000269" key="3">
    <source>
    </source>
</evidence>
<evidence type="ECO:0000269" key="4">
    <source>
    </source>
</evidence>
<evidence type="ECO:0000269" key="5">
    <source>
    </source>
</evidence>
<evidence type="ECO:0000269" key="6">
    <source>
    </source>
</evidence>
<evidence type="ECO:0000269" key="7">
    <source>
    </source>
</evidence>
<evidence type="ECO:0000269" key="8">
    <source>
    </source>
</evidence>
<evidence type="ECO:0000269" key="9">
    <source>
    </source>
</evidence>
<evidence type="ECO:0000269" key="10">
    <source>
    </source>
</evidence>
<evidence type="ECO:0000269" key="11">
    <source>
    </source>
</evidence>
<evidence type="ECO:0000269" key="12">
    <source>
    </source>
</evidence>
<evidence type="ECO:0000303" key="13">
    <source>
    </source>
</evidence>
<evidence type="ECO:0000305" key="14">
    <source>
    </source>
</evidence>
<evidence type="ECO:0000305" key="15">
    <source>
    </source>
</evidence>
<evidence type="ECO:0000305" key="16">
    <source>
    </source>
</evidence>
<protein>
    <recommendedName>
        <fullName evidence="13">Copper-dependent transcription factor 1</fullName>
    </recommendedName>
</protein>
<keyword id="KW-0186">Copper</keyword>
<keyword id="KW-0963">Cytoplasm</keyword>
<keyword id="KW-0479">Metal-binding</keyword>
<keyword id="KW-0539">Nucleus</keyword>
<keyword id="KW-0804">Transcription</keyword>
<keyword id="KW-0805">Transcription regulation</keyword>
<keyword id="KW-0862">Zinc</keyword>
<accession>J9VT33</accession>
<comment type="function">
    <text evidence="3 4 5 6 7 8 9 10 11 12">Transcription factor that regulates copper acquisition and homeostasis, and which plays a central role in fungal pathogenesis during neurologic infection (PubMed:21489137, PubMed:23511945, PubMed:29608794). The transcriptional regulation exerted by CUF1 is intrinsically complex since it acts as a dual sensor of copper levels, responsible for expression of a set of copper-specific copper transporters, CTR1 and CTR4, at low copper concentrations, and 2 metallothioneins, CMT1 and CMT2, at high copper concentrations (PubMed:17290306, PubMed:21489137, PubMed:21819456, PubMed:29608794). Positively regulates the expression of the copper acquisition factor BIM1 under copper-limiting conditions (PubMed:31932719). Also positively regulates the expression of super oxide dismutase SOD2 isoform 2 during oxidative stress and copper-limiting conditions (PubMed:33567338). Negatively regulates the expression of super oxide dismutase SOD1 during copper-limiting conditions (PubMed:33567338). Also regulates ATM1, an ABC transporter with functions in the iron-sulfur clusters (ISC) export machinery, during copper stress (PubMed:29089435). Another target of CUF1 is the gene encoding the laccase LAC1 (PubMed:19459959). Binds promoters of target genes at Cu-responsive elements (CuREs) that contain a variable A/T rich 5' region followed by the core consensus sequence 5'-G(G/C)CTC(A/G)-3' (PubMed:29608794, PubMed:31932719, PubMed:33567338). Negatively regulates capsule biosynthesis, probably via modulating iron acquisition through the high-affinity iron uptake pathway (PubMed:20112673).</text>
</comment>
<comment type="subcellular location">
    <subcellularLocation>
        <location evidence="6 12">Nucleus</location>
    </subcellularLocation>
    <subcellularLocation>
        <location evidence="6">Cytoplasm</location>
        <location evidence="6">Cell cortex</location>
    </subcellularLocation>
    <text evidence="6">Upon copper depletion, localizes exclusively to the nucleus as an activator for CTR4 transcription, while it is located to the cell periphery in the presence of exogenous copper.</text>
</comment>
<comment type="domain">
    <text evidence="14 15 16">The CRM-I motif (C-X-C-X3-C-X-C-X2-C-X2-H) and CRM-II motif (C-C-X3-C-X-C-X4-C-X-C-X3-C-C-X-C-C-X2-C-X-C) correspond to cystein-rich copper-binding domains.</text>
</comment>
<comment type="disruption phenotype">
    <text evidence="3 4 5 6 7 8 10 11">Leads to a clear defect in the ability to grow in both copper excess or copper deficiency conditions (PubMed:29608794). Impairs the activation of laccase LAC1 transcription by copper (PubMed:17290306, PubMed:19459959). Also reduces the expression of the genes coding for the copper transporters CTR1 and CTR4, and the metallothioneins CMT1 and CMT2 (PubMed:21819456). Impairs the induction of the copper acquisition factor BIM1 under copper-limiting conditions (PubMed:31932719). Impairs induction of super oxide dismutase SOD2 under copper-limiting conditions (PubMed:33567338). Impairs repression of super oxide dismutase SOD1 under copper-limiting conditions (PubMed:33567338). Leads to increased cell size and number of mitochondria within the cells, and a higher production of capsules (PubMed:20112673, PubMed:23511945). In copper-limited growth, exhibits copper deficiency, growth defect on glycerol and sensitivity to hydrogen peroxide and methionine (PubMed:17290306, PubMed:21489137). Shows severe hypersensitivity to exogenous copper, while a high level of copper accumulates when copper is in excess (PubMed:21489137). Results in attenuated virulence in an in vivo mouse model of cryptococcosis (PubMed:17290306). In mouse models, exhibits reduced dissemination to the brain, but no change in lung growth (PubMed:17290306).</text>
</comment>
<comment type="online information" name="Protein Spotlight">
    <link uri="https://www.proteinspotlight.org/back_issues/228/"/>
    <text>Either you, or me - Issue 228 of September 2020</text>
</comment>